<sequence>MDDLDALLADLESTTSHISKRPVFLSEEPPYSYPTGNHTYQEIAVPPPVPPPPSSEALNGTVLDPLDQWQPSGSRYAHQQPPSPSPIYSSSTKNSSASNPQDSVGSLCSRAGEEEHVYSFPNKQKSAEPSPTVMSSSLGSNLSELDRLLLELNAVQRSPSGFSAGMVSVQASREPLGSWGTEGRAIILSPFFQDEAESSPPLPGALSPLYGVPESNNLLGGKAGPLMKEKPKRNGGRGLEDVRPSVESLLDELENSVPSPVPAITVNQGEMSSPQRVTSSQQQTRISASSATRELDELMASLSDFKFMAQGKTGSSSPPGGLSKPGSQLDSMLGSLQSDLNKLGVATVAKGVCGACKKPIAGQVVTAMGKTWHPEHFVCTHCQEEIGSRNFFERDGQPYCEKDYHSLFSPRCYYCNGPILDKVVTALDRTWHPEHFFCAQCGAFFGPEGFHEKDGKAYCRKDYFDMFAPKCGGCARAILENYISALNTLWHPECFVCRECFTPFVNGSFFEHDGQPYCEVHYHERRGSLCSGCQKPITGRCITAMAKKFHPEHFVCAFCLKQLNKGTFKEQNDKPYCQSCFLKLFC</sequence>
<evidence type="ECO:0000250" key="1">
    <source>
        <dbReference type="UniProtKB" id="P49023"/>
    </source>
</evidence>
<evidence type="ECO:0000250" key="2">
    <source>
        <dbReference type="UniProtKB" id="P49024"/>
    </source>
</evidence>
<evidence type="ECO:0000250" key="3">
    <source>
        <dbReference type="UniProtKB" id="Q8VI36"/>
    </source>
</evidence>
<evidence type="ECO:0000255" key="4">
    <source>
        <dbReference type="PROSITE-ProRule" id="PRU00125"/>
    </source>
</evidence>
<evidence type="ECO:0000256" key="5">
    <source>
        <dbReference type="SAM" id="MobiDB-lite"/>
    </source>
</evidence>
<evidence type="ECO:0000269" key="6">
    <source>
    </source>
</evidence>
<evidence type="ECO:0000269" key="7">
    <source>
    </source>
</evidence>
<evidence type="ECO:0000303" key="8">
    <source>
    </source>
</evidence>
<evidence type="ECO:0000305" key="9"/>
<evidence type="ECO:0000312" key="10">
    <source>
        <dbReference type="RGD" id="1305759"/>
    </source>
</evidence>
<evidence type="ECO:0007744" key="11">
    <source>
    </source>
</evidence>
<evidence type="ECO:0007744" key="12">
    <source>
    </source>
</evidence>
<proteinExistence type="evidence at protein level"/>
<protein>
    <recommendedName>
        <fullName evidence="8">Paxillin</fullName>
    </recommendedName>
</protein>
<keyword id="KW-0007">Acetylation</keyword>
<keyword id="KW-0130">Cell adhesion</keyword>
<keyword id="KW-0965">Cell junction</keyword>
<keyword id="KW-0963">Cytoplasm</keyword>
<keyword id="KW-0206">Cytoskeleton</keyword>
<keyword id="KW-0440">LIM domain</keyword>
<keyword id="KW-0479">Metal-binding</keyword>
<keyword id="KW-0597">Phosphoprotein</keyword>
<keyword id="KW-1185">Reference proteome</keyword>
<keyword id="KW-0677">Repeat</keyword>
<keyword id="KW-0862">Zinc</keyword>
<accession>Q66H76</accession>
<reference key="1">
    <citation type="journal article" date="2004" name="Genome Res.">
        <title>The status, quality, and expansion of the NIH full-length cDNA project: the Mammalian Gene Collection (MGC).</title>
        <authorList>
            <consortium name="The MGC Project Team"/>
        </authorList>
    </citation>
    <scope>NUCLEOTIDE SEQUENCE [LARGE SCALE MRNA]</scope>
    <source>
        <tissue>Kidney</tissue>
    </source>
</reference>
<reference key="2">
    <citation type="journal article" date="2000" name="J. Cell Biol.">
        <title>Actopaxin, a new focal adhesion protein that binds paxillin LD motifs and actin and regulates cell adhesion.</title>
        <authorList>
            <person name="Nikolopoulos S.N."/>
            <person name="Turner C.E."/>
        </authorList>
    </citation>
    <scope>INTERACTION WITH PARVA</scope>
</reference>
<reference key="3">
    <citation type="journal article" date="2006" name="Biochem. Biophys. Res. Commun.">
        <title>Cyclic strain promotes shuttling of PYK2/Hic-5 complex from focal contacts in osteoblast-like cells.</title>
        <authorList>
            <person name="Guignandon A."/>
            <person name="Boutahar N."/>
            <person name="Rattner A."/>
            <person name="Vico L."/>
            <person name="Lafage-Proust M.-H."/>
        </authorList>
    </citation>
    <scope>INTERACTION WITH TGFB1I1</scope>
</reference>
<reference key="4">
    <citation type="journal article" date="2006" name="Proc. Natl. Acad. Sci. U.S.A.">
        <title>Quantitative phosphoproteomics of vasopressin-sensitive renal cells: regulation of aquaporin-2 phosphorylation at two sites.</title>
        <authorList>
            <person name="Hoffert J.D."/>
            <person name="Pisitkun T."/>
            <person name="Wang G."/>
            <person name="Shen R.-F."/>
            <person name="Knepper M.A."/>
        </authorList>
    </citation>
    <scope>PHOSPHORYLATION [LARGE SCALE ANALYSIS] AT SER-83</scope>
    <scope>IDENTIFICATION BY MASS SPECTROMETRY [LARGE SCALE ANALYSIS]</scope>
</reference>
<reference key="5">
    <citation type="journal article" date="2012" name="Nat. Commun.">
        <title>Quantitative maps of protein phosphorylation sites across 14 different rat organs and tissues.</title>
        <authorList>
            <person name="Lundby A."/>
            <person name="Secher A."/>
            <person name="Lage K."/>
            <person name="Nordsborg N.B."/>
            <person name="Dmytriyev A."/>
            <person name="Lundby C."/>
            <person name="Olsen J.V."/>
        </authorList>
    </citation>
    <scope>PHOSPHORYLATION [LARGE SCALE ANALYSIS] AT SER-83; SER-126; SER-130; SER-143; SER-259; SER-287; SER-290; SER-327 AND SER-335</scope>
    <scope>IDENTIFICATION BY MASS SPECTROMETRY [LARGE SCALE ANALYSIS]</scope>
</reference>
<gene>
    <name evidence="10" type="primary">Pxn</name>
</gene>
<comment type="function">
    <text evidence="1">Cytoskeletal protein involved in actin-membrane attachment at sites of cell adhesion to the extracellular matrix (focal adhesion). Recruits other proteins such as TRIM15 to focal adhesion.</text>
</comment>
<comment type="subunit">
    <text evidence="1 3 6 7">Interacts in vitro with VCL/vinculin as well as to the SH3 domain of SRC and, when tyrosine phosphorylated, to the SH2 domain of CRK (By similarity). Interacts with GIT1 (By similarity). Interacts with NUDT16L1/SDOS (By similarity). Interacts with PTK2/FAK1 (By similarity). Interacts with PTK2B/PYK2 (By similarity). Interacts with ASAP2 (By similarity). Interacts with unphosphorylated ITGA4 (By similarity). Interacts with RNF5 (By similarity). Interacts with PDCD10 (By similarity). Interacts with NEK3, the interaction is prolactin-dependent (By similarity). Interacts with PTK6 (By similarity). Interacts with TGFB1I1 (PubMed:16546139). Interacts with SORBS1 (By similarity). Interacts with PARVB (By similarity). Interacts (via LD motif 4) with PARVA/PARVIN (PubMed:11134073). Interacts (via LD motif 4) with ILK (By similarity). Interacts (via cytoplasmic domain) with CEACAM1; the interaction is phosphotyrosyl-dependent (By similarity). Interacts with LIMA1; this complex stabilizes actin dynamics (By similarity). Interacts with CD36 (via C-terminus) (By similarity). Interacts with TRIM15 (By similarity). Interacts with PAK4; PAK4 acts as a scaffold to suppport PAXI phosphorylation at Ser-301 (By similarity).</text>
</comment>
<comment type="subcellular location">
    <subcellularLocation>
        <location evidence="1">Cytoplasm</location>
        <location evidence="1">Cytoskeleton</location>
    </subcellularLocation>
    <subcellularLocation>
        <location evidence="1">Cell junction</location>
        <location evidence="1">Focal adhesion</location>
    </subcellularLocation>
    <subcellularLocation>
        <location evidence="3">Cytoplasm</location>
        <location evidence="3">Cell cortex</location>
    </subcellularLocation>
    <text evidence="1">Colocalizes with integrins at the cell periphery. Colocalizes with PXN to membrane ruffles and the leading edge of migrating cells (By similarity).</text>
</comment>
<comment type="PTM">
    <text evidence="1">Phosphorylated by MAPK1/ERK2 (By similarity). Phosphorylated on tyrosine residues during integrin-mediated cell adhesion, embryonic development, fibroblast transformation and following stimulation of cells by mitogens. Phosphorylation at Ser-273 by CDK5 reduces its interaction with PTK2/FAK1 in matrix-cell focal adhesions (MCFA) during oligodendrocytes (OLs) differentiation (By similarity). Phosphorylation at Tyr-31 and Tyr-118 by PTK6 promote the activation of RAC1 via CRK/CrKII, thereby promoting migration and invasion (By similarity). Phosphorylation at Ser-279 by SLK is required for PXN redistribution and cell motility (By similarity). Phosphorylation at Ser-301 promotes focal adhesion disassembly during cell migration (By similarity).</text>
</comment>
<comment type="similarity">
    <text evidence="9">Belongs to the paxillin family.</text>
</comment>
<feature type="chain" id="PRO_0000075856" description="Paxillin">
    <location>
        <begin position="1"/>
        <end position="586"/>
    </location>
</feature>
<feature type="domain" description="LIM zinc-binding 1" evidence="4">
    <location>
        <begin position="353"/>
        <end position="403"/>
    </location>
</feature>
<feature type="domain" description="LIM zinc-binding 2" evidence="4">
    <location>
        <begin position="412"/>
        <end position="462"/>
    </location>
</feature>
<feature type="domain" description="LIM zinc-binding 3" evidence="4">
    <location>
        <begin position="471"/>
        <end position="521"/>
    </location>
</feature>
<feature type="domain" description="LIM zinc-binding 4" evidence="4">
    <location>
        <begin position="530"/>
        <end position="580"/>
    </location>
</feature>
<feature type="region of interest" description="Disordered" evidence="5">
    <location>
        <begin position="13"/>
        <end position="138"/>
    </location>
</feature>
<feature type="region of interest" description="Disordered" evidence="5">
    <location>
        <begin position="220"/>
        <end position="241"/>
    </location>
</feature>
<feature type="region of interest" description="Disordered" evidence="5">
    <location>
        <begin position="266"/>
        <end position="290"/>
    </location>
</feature>
<feature type="region of interest" description="Required for binding to PARVA and ILK" evidence="2">
    <location>
        <begin position="291"/>
        <end position="310"/>
    </location>
</feature>
<feature type="region of interest" description="Disordered" evidence="5">
    <location>
        <begin position="309"/>
        <end position="329"/>
    </location>
</feature>
<feature type="short sequence motif" description="LD motif 1">
    <location>
        <begin position="3"/>
        <end position="15"/>
    </location>
</feature>
<feature type="short sequence motif" description="LD motif 2">
    <location>
        <begin position="144"/>
        <end position="156"/>
    </location>
</feature>
<feature type="short sequence motif" description="LD motif 3">
    <location>
        <begin position="245"/>
        <end position="257"/>
    </location>
</feature>
<feature type="short sequence motif" description="LD motif 4">
    <location>
        <begin position="294"/>
        <end position="305"/>
    </location>
</feature>
<feature type="short sequence motif" description="LD motif 5">
    <location>
        <begin position="328"/>
        <end position="340"/>
    </location>
</feature>
<feature type="compositionally biased region" description="Pro residues" evidence="5">
    <location>
        <begin position="45"/>
        <end position="54"/>
    </location>
</feature>
<feature type="compositionally biased region" description="Low complexity" evidence="5">
    <location>
        <begin position="86"/>
        <end position="98"/>
    </location>
</feature>
<feature type="compositionally biased region" description="Polar residues" evidence="5">
    <location>
        <begin position="121"/>
        <end position="137"/>
    </location>
</feature>
<feature type="compositionally biased region" description="Low complexity" evidence="5">
    <location>
        <begin position="310"/>
        <end position="329"/>
    </location>
</feature>
<feature type="modified residue" description="N-acetylmethionine" evidence="1">
    <location>
        <position position="1"/>
    </location>
</feature>
<feature type="modified residue" description="Phosphotyrosine; by PTK6" evidence="1">
    <location>
        <position position="31"/>
    </location>
</feature>
<feature type="modified residue" description="Phosphoserine" evidence="11 12">
    <location>
        <position position="83"/>
    </location>
</feature>
<feature type="modified residue" description="Phosphoserine" evidence="1">
    <location>
        <position position="85"/>
    </location>
</feature>
<feature type="modified residue" description="Phosphotyrosine" evidence="3">
    <location>
        <position position="88"/>
    </location>
</feature>
<feature type="modified residue" description="Phosphoserine" evidence="1">
    <location>
        <position position="106"/>
    </location>
</feature>
<feature type="modified residue" description="Phosphotyrosine; by PTK6" evidence="1">
    <location>
        <position position="118"/>
    </location>
</feature>
<feature type="modified residue" description="Phosphoserine" evidence="1">
    <location>
        <position position="119"/>
    </location>
</feature>
<feature type="modified residue" description="Phosphoserine" evidence="12">
    <location>
        <position position="126"/>
    </location>
</feature>
<feature type="modified residue" description="Phosphoserine" evidence="12">
    <location>
        <position position="130"/>
    </location>
</feature>
<feature type="modified residue" description="Phosphothreonine" evidence="3">
    <location>
        <position position="132"/>
    </location>
</feature>
<feature type="modified residue" description="Phosphoserine" evidence="1">
    <location>
        <position position="137"/>
    </location>
</feature>
<feature type="modified residue" description="Phosphoserine" evidence="3">
    <location>
        <position position="140"/>
    </location>
</feature>
<feature type="modified residue" description="Phosphoserine" evidence="12">
    <location>
        <position position="143"/>
    </location>
</feature>
<feature type="modified residue" description="Phosphotyrosine" evidence="1">
    <location>
        <position position="210"/>
    </location>
</feature>
<feature type="modified residue" description="Phosphoserine" evidence="12">
    <location>
        <position position="259"/>
    </location>
</feature>
<feature type="modified residue" description="Phosphoserine; by CDK5" evidence="1">
    <location>
        <position position="273"/>
    </location>
</feature>
<feature type="modified residue" description="Phosphoserine" evidence="1">
    <location>
        <position position="279"/>
    </location>
</feature>
<feature type="modified residue" description="Phosphoserine" evidence="12">
    <location>
        <position position="287"/>
    </location>
</feature>
<feature type="modified residue" description="Phosphoserine" evidence="12">
    <location>
        <position position="290"/>
    </location>
</feature>
<feature type="modified residue" description="Phosphoserine" evidence="1">
    <location>
        <position position="301"/>
    </location>
</feature>
<feature type="modified residue" description="Phosphoserine" evidence="1">
    <location>
        <position position="317"/>
    </location>
</feature>
<feature type="modified residue" description="Phosphoserine" evidence="12">
    <location>
        <position position="327"/>
    </location>
</feature>
<feature type="modified residue" description="Phosphoserine" evidence="12">
    <location>
        <position position="335"/>
    </location>
</feature>
<feature type="modified residue" description="Phosphoserine" evidence="1">
    <location>
        <position position="528"/>
    </location>
</feature>
<dbReference type="EMBL" id="BC081984">
    <property type="protein sequence ID" value="AAH81984.1"/>
    <property type="molecule type" value="mRNA"/>
</dbReference>
<dbReference type="RefSeq" id="NP_001012147.1">
    <property type="nucleotide sequence ID" value="NM_001012147.1"/>
</dbReference>
<dbReference type="RefSeq" id="XP_063127613.1">
    <property type="nucleotide sequence ID" value="XM_063271543.1"/>
</dbReference>
<dbReference type="SMR" id="Q66H76"/>
<dbReference type="BioGRID" id="262228">
    <property type="interactions" value="4"/>
</dbReference>
<dbReference type="DIP" id="DIP-48423N"/>
<dbReference type="FunCoup" id="Q66H76">
    <property type="interactions" value="1353"/>
</dbReference>
<dbReference type="IntAct" id="Q66H76">
    <property type="interactions" value="1"/>
</dbReference>
<dbReference type="STRING" id="10116.ENSRNOP00000043928"/>
<dbReference type="ChEMBL" id="CHEMBL5613"/>
<dbReference type="GlyGen" id="Q66H76">
    <property type="glycosylation" value="1 site, 1 O-linked glycan (1 site)"/>
</dbReference>
<dbReference type="iPTMnet" id="Q66H76"/>
<dbReference type="PhosphoSitePlus" id="Q66H76"/>
<dbReference type="jPOST" id="Q66H76"/>
<dbReference type="PaxDb" id="10116-ENSRNOP00000043928"/>
<dbReference type="GeneID" id="360820"/>
<dbReference type="AGR" id="RGD:1305759"/>
<dbReference type="RGD" id="1305759">
    <property type="gene designation" value="Pxn"/>
</dbReference>
<dbReference type="VEuPathDB" id="HostDB:ENSRNOG00000001149"/>
<dbReference type="eggNOG" id="KOG1703">
    <property type="taxonomic scope" value="Eukaryota"/>
</dbReference>
<dbReference type="InParanoid" id="Q66H76"/>
<dbReference type="OrthoDB" id="15567at2759"/>
<dbReference type="PhylomeDB" id="Q66H76"/>
<dbReference type="Reactome" id="R-RNO-180292">
    <property type="pathway name" value="GAB1 signalosome"/>
</dbReference>
<dbReference type="Reactome" id="R-RNO-4420097">
    <property type="pathway name" value="VEGFA-VEGFR2 Pathway"/>
</dbReference>
<dbReference type="Reactome" id="R-RNO-445355">
    <property type="pathway name" value="Smooth Muscle Contraction"/>
</dbReference>
<dbReference type="Reactome" id="R-RNO-446343">
    <property type="pathway name" value="Localization of the PINCH-ILK-PARVIN complex to focal adhesions"/>
</dbReference>
<dbReference type="Reactome" id="R-RNO-446388">
    <property type="pathway name" value="Regulation of cytoskeletal remodeling and cell spreading by IPP complex components"/>
</dbReference>
<dbReference type="Reactome" id="R-RNO-8849471">
    <property type="pathway name" value="PTK6 Regulates RHO GTPases, RAS GTPase and MAP kinases"/>
</dbReference>
<dbReference type="PRO" id="PR:Q66H76"/>
<dbReference type="Proteomes" id="UP000002494">
    <property type="component" value="Chromosome 12"/>
</dbReference>
<dbReference type="Bgee" id="ENSRNOG00000001149">
    <property type="expression patterns" value="Expressed in lung and 19 other cell types or tissues"/>
</dbReference>
<dbReference type="ExpressionAtlas" id="Q66H76">
    <property type="expression patterns" value="baseline and differential"/>
</dbReference>
<dbReference type="GO" id="GO:0005938">
    <property type="term" value="C:cell cortex"/>
    <property type="evidence" value="ECO:0007669"/>
    <property type="project" value="UniProtKB-SubCell"/>
</dbReference>
<dbReference type="GO" id="GO:0031252">
    <property type="term" value="C:cell leading edge"/>
    <property type="evidence" value="ECO:0000266"/>
    <property type="project" value="RGD"/>
</dbReference>
<dbReference type="GO" id="GO:0005911">
    <property type="term" value="C:cell-cell junction"/>
    <property type="evidence" value="ECO:0000266"/>
    <property type="project" value="RGD"/>
</dbReference>
<dbReference type="GO" id="GO:0005925">
    <property type="term" value="C:focal adhesion"/>
    <property type="evidence" value="ECO:0000314"/>
    <property type="project" value="RGD"/>
</dbReference>
<dbReference type="GO" id="GO:0030027">
    <property type="term" value="C:lamellipodium"/>
    <property type="evidence" value="ECO:0000266"/>
    <property type="project" value="RGD"/>
</dbReference>
<dbReference type="GO" id="GO:0005886">
    <property type="term" value="C:plasma membrane"/>
    <property type="evidence" value="ECO:0000266"/>
    <property type="project" value="RGD"/>
</dbReference>
<dbReference type="GO" id="GO:0001725">
    <property type="term" value="C:stress fiber"/>
    <property type="evidence" value="ECO:0000266"/>
    <property type="project" value="RGD"/>
</dbReference>
<dbReference type="GO" id="GO:0008013">
    <property type="term" value="F:beta-catenin binding"/>
    <property type="evidence" value="ECO:0000266"/>
    <property type="project" value="RGD"/>
</dbReference>
<dbReference type="GO" id="GO:0051435">
    <property type="term" value="F:BH4 domain binding"/>
    <property type="evidence" value="ECO:0000266"/>
    <property type="project" value="RGD"/>
</dbReference>
<dbReference type="GO" id="GO:0005178">
    <property type="term" value="F:integrin binding"/>
    <property type="evidence" value="ECO:0000353"/>
    <property type="project" value="RGD"/>
</dbReference>
<dbReference type="GO" id="GO:0005078">
    <property type="term" value="F:MAP-kinase scaffold activity"/>
    <property type="evidence" value="ECO:0000266"/>
    <property type="project" value="RGD"/>
</dbReference>
<dbReference type="GO" id="GO:0046872">
    <property type="term" value="F:metal ion binding"/>
    <property type="evidence" value="ECO:0007669"/>
    <property type="project" value="UniProtKB-KW"/>
</dbReference>
<dbReference type="GO" id="GO:0038191">
    <property type="term" value="F:neuropilin binding"/>
    <property type="evidence" value="ECO:0000266"/>
    <property type="project" value="RGD"/>
</dbReference>
<dbReference type="GO" id="GO:0019901">
    <property type="term" value="F:protein kinase binding"/>
    <property type="evidence" value="ECO:0000353"/>
    <property type="project" value="RGD"/>
</dbReference>
<dbReference type="GO" id="GO:0019903">
    <property type="term" value="F:protein phosphatase binding"/>
    <property type="evidence" value="ECO:0000266"/>
    <property type="project" value="RGD"/>
</dbReference>
<dbReference type="GO" id="GO:0044877">
    <property type="term" value="F:protein-containing complex binding"/>
    <property type="evidence" value="ECO:0000353"/>
    <property type="project" value="RGD"/>
</dbReference>
<dbReference type="GO" id="GO:0017166">
    <property type="term" value="F:vinculin binding"/>
    <property type="evidence" value="ECO:0000266"/>
    <property type="project" value="RGD"/>
</dbReference>
<dbReference type="GO" id="GO:0048754">
    <property type="term" value="P:branching morphogenesis of an epithelial tube"/>
    <property type="evidence" value="ECO:0000266"/>
    <property type="project" value="RGD"/>
</dbReference>
<dbReference type="GO" id="GO:0016477">
    <property type="term" value="P:cell migration"/>
    <property type="evidence" value="ECO:0000266"/>
    <property type="project" value="RGD"/>
</dbReference>
<dbReference type="GO" id="GO:0034614">
    <property type="term" value="P:cellular response to reactive oxygen species"/>
    <property type="evidence" value="ECO:0000266"/>
    <property type="project" value="RGD"/>
</dbReference>
<dbReference type="GO" id="GO:0007010">
    <property type="term" value="P:cytoskeleton organization"/>
    <property type="evidence" value="ECO:0000266"/>
    <property type="project" value="RGD"/>
</dbReference>
<dbReference type="GO" id="GO:0043542">
    <property type="term" value="P:endothelial cell migration"/>
    <property type="evidence" value="ECO:0000266"/>
    <property type="project" value="RGD"/>
</dbReference>
<dbReference type="GO" id="GO:0048041">
    <property type="term" value="P:focal adhesion assembly"/>
    <property type="evidence" value="ECO:0000266"/>
    <property type="project" value="RGD"/>
</dbReference>
<dbReference type="GO" id="GO:0060396">
    <property type="term" value="P:growth hormone receptor signaling pathway"/>
    <property type="evidence" value="ECO:0000266"/>
    <property type="project" value="RGD"/>
</dbReference>
<dbReference type="GO" id="GO:0007229">
    <property type="term" value="P:integrin-mediated signaling pathway"/>
    <property type="evidence" value="ECO:0000266"/>
    <property type="project" value="RGD"/>
</dbReference>
<dbReference type="GO" id="GO:0030032">
    <property type="term" value="P:lamellipodium assembly"/>
    <property type="evidence" value="ECO:0000266"/>
    <property type="project" value="RGD"/>
</dbReference>
<dbReference type="GO" id="GO:0045766">
    <property type="term" value="P:positive regulation of angiogenesis"/>
    <property type="evidence" value="ECO:0000266"/>
    <property type="project" value="RGD"/>
</dbReference>
<dbReference type="GO" id="GO:0051496">
    <property type="term" value="P:positive regulation of stress fiber assembly"/>
    <property type="evidence" value="ECO:0000266"/>
    <property type="project" value="RGD"/>
</dbReference>
<dbReference type="GO" id="GO:0008360">
    <property type="term" value="P:regulation of cell shape"/>
    <property type="evidence" value="ECO:0000266"/>
    <property type="project" value="RGD"/>
</dbReference>
<dbReference type="GO" id="GO:1901652">
    <property type="term" value="P:response to peptide"/>
    <property type="evidence" value="ECO:0000353"/>
    <property type="project" value="RGD"/>
</dbReference>
<dbReference type="GO" id="GO:0034446">
    <property type="term" value="P:substrate adhesion-dependent cell spreading"/>
    <property type="evidence" value="ECO:0000266"/>
    <property type="project" value="RGD"/>
</dbReference>
<dbReference type="GO" id="GO:0007179">
    <property type="term" value="P:transforming growth factor beta receptor signaling pathway"/>
    <property type="evidence" value="ECO:0000266"/>
    <property type="project" value="RGD"/>
</dbReference>
<dbReference type="CDD" id="cd09336">
    <property type="entry name" value="LIM1_Paxillin_like"/>
    <property type="match status" value="1"/>
</dbReference>
<dbReference type="CDD" id="cd09407">
    <property type="entry name" value="LIM2_Paxillin"/>
    <property type="match status" value="1"/>
</dbReference>
<dbReference type="CDD" id="cd09338">
    <property type="entry name" value="LIM3_Paxillin_like"/>
    <property type="match status" value="1"/>
</dbReference>
<dbReference type="CDD" id="cd09411">
    <property type="entry name" value="LIM4_Paxillin"/>
    <property type="match status" value="1"/>
</dbReference>
<dbReference type="FunFam" id="2.10.110.10:FF:000008">
    <property type="entry name" value="Paxillin isoform 1"/>
    <property type="match status" value="1"/>
</dbReference>
<dbReference type="FunFam" id="2.10.110.10:FF:000009">
    <property type="entry name" value="Paxillin isoform 1"/>
    <property type="match status" value="1"/>
</dbReference>
<dbReference type="FunFam" id="2.10.110.10:FF:000012">
    <property type="entry name" value="Paxillin isoform 1"/>
    <property type="match status" value="1"/>
</dbReference>
<dbReference type="FunFam" id="2.10.110.10:FF:000018">
    <property type="entry name" value="Paxillin isoform 1"/>
    <property type="match status" value="1"/>
</dbReference>
<dbReference type="Gene3D" id="2.10.110.10">
    <property type="entry name" value="Cysteine Rich Protein"/>
    <property type="match status" value="4"/>
</dbReference>
<dbReference type="InterPro" id="IPR047072">
    <property type="entry name" value="Paxillin_Lim_dom2"/>
</dbReference>
<dbReference type="InterPro" id="IPR001904">
    <property type="entry name" value="Paxillin_Lim_dom4"/>
</dbReference>
<dbReference type="InterPro" id="IPR047075">
    <property type="entry name" value="Paxillin_TGFB1I1_LIM_dom1"/>
</dbReference>
<dbReference type="InterPro" id="IPR017305">
    <property type="entry name" value="Tgfb1i1/Leupaxin/TGFB1I1"/>
</dbReference>
<dbReference type="InterPro" id="IPR001781">
    <property type="entry name" value="Znf_LIM"/>
</dbReference>
<dbReference type="PANTHER" id="PTHR24216:SF11">
    <property type="entry name" value="PAXILLIN"/>
    <property type="match status" value="1"/>
</dbReference>
<dbReference type="PANTHER" id="PTHR24216">
    <property type="entry name" value="PAXILLIN-RELATED"/>
    <property type="match status" value="1"/>
</dbReference>
<dbReference type="Pfam" id="PF00412">
    <property type="entry name" value="LIM"/>
    <property type="match status" value="4"/>
</dbReference>
<dbReference type="Pfam" id="PF03535">
    <property type="entry name" value="Paxillin"/>
    <property type="match status" value="2"/>
</dbReference>
<dbReference type="PIRSF" id="PIRSF037881">
    <property type="entry name" value="Leupaxin"/>
    <property type="match status" value="1"/>
</dbReference>
<dbReference type="PRINTS" id="PR00832">
    <property type="entry name" value="PAXILLIN"/>
</dbReference>
<dbReference type="SMART" id="SM00132">
    <property type="entry name" value="LIM"/>
    <property type="match status" value="4"/>
</dbReference>
<dbReference type="SUPFAM" id="SSF57716">
    <property type="entry name" value="Glucocorticoid receptor-like (DNA-binding domain)"/>
    <property type="match status" value="5"/>
</dbReference>
<dbReference type="PROSITE" id="PS00478">
    <property type="entry name" value="LIM_DOMAIN_1"/>
    <property type="match status" value="4"/>
</dbReference>
<dbReference type="PROSITE" id="PS50023">
    <property type="entry name" value="LIM_DOMAIN_2"/>
    <property type="match status" value="4"/>
</dbReference>
<name>PAXI_RAT</name>
<organism>
    <name type="scientific">Rattus norvegicus</name>
    <name type="common">Rat</name>
    <dbReference type="NCBI Taxonomy" id="10116"/>
    <lineage>
        <taxon>Eukaryota</taxon>
        <taxon>Metazoa</taxon>
        <taxon>Chordata</taxon>
        <taxon>Craniata</taxon>
        <taxon>Vertebrata</taxon>
        <taxon>Euteleostomi</taxon>
        <taxon>Mammalia</taxon>
        <taxon>Eutheria</taxon>
        <taxon>Euarchontoglires</taxon>
        <taxon>Glires</taxon>
        <taxon>Rodentia</taxon>
        <taxon>Myomorpha</taxon>
        <taxon>Muroidea</taxon>
        <taxon>Muridae</taxon>
        <taxon>Murinae</taxon>
        <taxon>Rattus</taxon>
    </lineage>
</organism>